<keyword id="KW-0106">Calcium</keyword>
<keyword id="KW-1015">Disulfide bond</keyword>
<keyword id="KW-0325">Glycoprotein</keyword>
<keyword id="KW-0378">Hydrolase</keyword>
<keyword id="KW-0479">Metal-binding</keyword>
<keyword id="KW-0645">Protease</keyword>
<keyword id="KW-1267">Proteomics identification</keyword>
<keyword id="KW-1185">Reference proteome</keyword>
<keyword id="KW-0677">Repeat</keyword>
<keyword id="KW-0964">Secreted</keyword>
<keyword id="KW-0720">Serine protease</keyword>
<keyword id="KW-0732">Signal</keyword>
<keyword id="KW-0865">Zymogen</keyword>
<name>OVCH2_HUMAN</name>
<accession>Q7RTZ1</accession>
<reference key="1">
    <citation type="journal article" date="2006" name="Nature">
        <title>Human chromosome 11 DNA sequence and analysis including novel gene identification.</title>
        <authorList>
            <person name="Taylor T.D."/>
            <person name="Noguchi H."/>
            <person name="Totoki Y."/>
            <person name="Toyoda A."/>
            <person name="Kuroki Y."/>
            <person name="Dewar K."/>
            <person name="Lloyd C."/>
            <person name="Itoh T."/>
            <person name="Takeda T."/>
            <person name="Kim D.-W."/>
            <person name="She X."/>
            <person name="Barlow K.F."/>
            <person name="Bloom T."/>
            <person name="Bruford E."/>
            <person name="Chang J.L."/>
            <person name="Cuomo C.A."/>
            <person name="Eichler E."/>
            <person name="FitzGerald M.G."/>
            <person name="Jaffe D.B."/>
            <person name="LaButti K."/>
            <person name="Nicol R."/>
            <person name="Park H.-S."/>
            <person name="Seaman C."/>
            <person name="Sougnez C."/>
            <person name="Yang X."/>
            <person name="Zimmer A.R."/>
            <person name="Zody M.C."/>
            <person name="Birren B.W."/>
            <person name="Nusbaum C."/>
            <person name="Fujiyama A."/>
            <person name="Hattori M."/>
            <person name="Rogers J."/>
            <person name="Lander E.S."/>
            <person name="Sakaki Y."/>
        </authorList>
    </citation>
    <scope>NUCLEOTIDE SEQUENCE [LARGE SCALE GENOMIC DNA]</scope>
</reference>
<reference key="2">
    <citation type="journal article" date="2003" name="Nat. Rev. Genet.">
        <title>Human and mouse proteases: a comparative genomic approach.</title>
        <authorList>
            <person name="Puente X.S."/>
            <person name="Sanchez L.M."/>
            <person name="Overall C.M."/>
            <person name="Lopez-Otin C."/>
        </authorList>
    </citation>
    <scope>IDENTIFICATION</scope>
</reference>
<reference key="3">
    <citation type="journal article" date="2020" name="Science">
        <title>NELL2-mediated lumicrine signaling through OVCH2 is required for male fertility.</title>
        <authorList>
            <person name="Kiyozumi D."/>
            <person name="Noda T."/>
            <person name="Yamaguchi R."/>
            <person name="Tobita T."/>
            <person name="Matsumura T."/>
            <person name="Shimada K."/>
            <person name="Kodani M."/>
            <person name="Kohda T."/>
            <person name="Fujihara Y."/>
            <person name="Ozawa M."/>
            <person name="Yu Z."/>
            <person name="Miklossy G."/>
            <person name="Bohren K.M."/>
            <person name="Horie M."/>
            <person name="Okabe M."/>
            <person name="Matzuk M.M."/>
            <person name="Ikawa M."/>
        </authorList>
    </citation>
    <scope>FUNCTION</scope>
</reference>
<proteinExistence type="evidence at protein level"/>
<sequence length="564" mass="62642">MLISRNKLILLLGIVFFERGKSATLSLPKAPSCGQSLVKVQPWNYFNIFSRILGGSQVEKGSYPWQVSLKQRQKHICGGSIVSPQWVITAAHCIANRNIVSTLNVTAGEYDLSQTDPGEQTLTIETVIIHPHFSTKKPMDYDIALLKMAGAFQFGHFVGPICLPELREQFEAGFICTTAGWGRLTEGGVLSQVLQEVNLPILTWEECVAALLTLKRPISGKTFLCTGFPDGGRDACQGDSGGSLMCRNKKGAWTLAGVTSWGLGCGRGWRNNVRKSDQGSPGIFTDISKVLPWIHEHIQTGNRRKSSRAWCSEQDVIVSGAEGKLHFPESLHLYYESKQRCVWTLLVPEEMHVLLSFSHLDVESCHHSYLSMYSLEDRPIGKFCGESLPSSILIGSNSLRLKFVSDATDNAARFNLTYKALKPNYIPDSGCSYLTVLFEEGLIQSLNYPENYSDKANCDWIFQASKHHLIKLSFQSLEIEESGDCTSDYVTVHSDVERKKEIARLCGYDVPTPVLSPSSIMLISFHSDENGTCRGFQATVSFIPKAGKKIELPTLWFPVLILVM</sequence>
<feature type="signal peptide" evidence="4">
    <location>
        <begin position="1"/>
        <end position="22"/>
    </location>
</feature>
<feature type="propeptide" id="PRO_0000261181" description="Activation peptide" evidence="1">
    <location>
        <begin position="23"/>
        <end position="51"/>
    </location>
</feature>
<feature type="chain" id="PRO_0000261182" description="Ovochymase-2">
    <location>
        <begin position="52"/>
        <end position="564"/>
    </location>
</feature>
<feature type="domain" description="Peptidase S1" evidence="6">
    <location>
        <begin position="52"/>
        <end position="299"/>
    </location>
</feature>
<feature type="domain" description="CUB 1" evidence="5">
    <location>
        <begin position="311"/>
        <end position="421"/>
    </location>
</feature>
<feature type="domain" description="CUB 2" evidence="5">
    <location>
        <begin position="431"/>
        <end position="543"/>
    </location>
</feature>
<feature type="active site" description="Charge relay system" evidence="1">
    <location>
        <position position="92"/>
    </location>
</feature>
<feature type="active site" description="Charge relay system" evidence="1">
    <location>
        <position position="142"/>
    </location>
</feature>
<feature type="active site" description="Charge relay system" evidence="1">
    <location>
        <position position="240"/>
    </location>
</feature>
<feature type="binding site" evidence="1">
    <location>
        <position position="119"/>
    </location>
    <ligand>
        <name>Ca(2+)</name>
        <dbReference type="ChEBI" id="CHEBI:29108"/>
    </ligand>
</feature>
<feature type="glycosylation site" description="N-linked (GlcNAc...) asparagine" evidence="4">
    <location>
        <position position="104"/>
    </location>
</feature>
<feature type="glycosylation site" description="N-linked (GlcNAc...) asparagine" evidence="4">
    <location>
        <position position="415"/>
    </location>
</feature>
<feature type="glycosylation site" description="N-linked (GlcNAc...) asparagine" evidence="4">
    <location>
        <position position="451"/>
    </location>
</feature>
<feature type="glycosylation site" description="N-linked (GlcNAc...) asparagine" evidence="4">
    <location>
        <position position="530"/>
    </location>
</feature>
<feature type="disulfide bond" evidence="1">
    <location>
        <begin position="77"/>
        <end position="93"/>
    </location>
</feature>
<feature type="disulfide bond" evidence="1">
    <location>
        <begin position="176"/>
        <end position="246"/>
    </location>
</feature>
<feature type="disulfide bond" evidence="1">
    <location>
        <begin position="207"/>
        <end position="225"/>
    </location>
</feature>
<feature type="disulfide bond" evidence="1">
    <location>
        <begin position="236"/>
        <end position="265"/>
    </location>
</feature>
<feature type="disulfide bond" evidence="1">
    <location>
        <begin position="311"/>
        <end position="341"/>
    </location>
</feature>
<feature type="disulfide bond" evidence="1">
    <location>
        <begin position="365"/>
        <end position="384"/>
    </location>
</feature>
<feature type="disulfide bond" evidence="1">
    <location>
        <begin position="431"/>
        <end position="458"/>
    </location>
</feature>
<feature type="disulfide bond" evidence="1">
    <location>
        <begin position="485"/>
        <end position="506"/>
    </location>
</feature>
<feature type="sequence variant" id="VAR_029097" description="In dbSNP:rs7927138.">
    <original>R</original>
    <variation>Q</variation>
    <location>
        <position position="19"/>
    </location>
</feature>
<feature type="sequence variant" id="VAR_059786" description="In dbSNP:rs12289558.">
    <original>T</original>
    <variation>A</variation>
    <location>
        <position position="24"/>
    </location>
</feature>
<feature type="sequence variant" id="VAR_029098" description="In dbSNP:rs10839849.">
    <original>P</original>
    <variation>S</variation>
    <location>
        <position position="292"/>
    </location>
</feature>
<feature type="sequence variant" id="VAR_029099" description="In dbSNP:rs3925028.">
    <original>G</original>
    <variation>E</variation>
    <location>
        <position position="381"/>
    </location>
</feature>
<feature type="sequence variant" id="VAR_029100" description="In dbSNP:rs4528317.">
    <original>N</original>
    <variation>T</variation>
    <location>
        <position position="410"/>
    </location>
</feature>
<feature type="sequence variant" id="VAR_057160" description="In dbSNP:rs4528317.">
    <original>N</original>
    <variation>Y</variation>
    <location>
        <position position="410"/>
    </location>
</feature>
<feature type="sequence variant" id="VAR_029101" description="In dbSNP:rs3925027.">
    <original>R</original>
    <variation>G</variation>
    <location>
        <position position="413"/>
    </location>
</feature>
<feature type="sequence variant" id="VAR_029102" description="In dbSNP:rs4519083.">
    <original>H</original>
    <variation>Q</variation>
    <location>
        <position position="526"/>
    </location>
</feature>
<feature type="sequence variant" id="VAR_029103" description="In dbSNP:rs4633461.">
    <original>T</original>
    <variation>I</variation>
    <location>
        <position position="539"/>
    </location>
</feature>
<evidence type="ECO:0000250" key="1"/>
<evidence type="ECO:0000250" key="2">
    <source>
        <dbReference type="UniProtKB" id="P79953"/>
    </source>
</evidence>
<evidence type="ECO:0000250" key="3">
    <source>
        <dbReference type="UniProtKB" id="Q7M761"/>
    </source>
</evidence>
<evidence type="ECO:0000255" key="4"/>
<evidence type="ECO:0000255" key="5">
    <source>
        <dbReference type="PROSITE-ProRule" id="PRU00059"/>
    </source>
</evidence>
<evidence type="ECO:0000255" key="6">
    <source>
        <dbReference type="PROSITE-ProRule" id="PRU00274"/>
    </source>
</evidence>
<evidence type="ECO:0000269" key="7">
    <source>
    </source>
</evidence>
<evidence type="ECO:0000305" key="8"/>
<evidence type="ECO:0000312" key="9">
    <source>
        <dbReference type="HGNC" id="HGNC:29970"/>
    </source>
</evidence>
<dbReference type="EC" id="3.4.21.-" evidence="7"/>
<dbReference type="EMBL" id="AC104237">
    <property type="status" value="NOT_ANNOTATED_CDS"/>
    <property type="molecule type" value="Genomic_DNA"/>
</dbReference>
<dbReference type="EMBL" id="BN000120">
    <property type="protein sequence ID" value="CAD66452.1"/>
    <property type="molecule type" value="Genomic_DNA"/>
</dbReference>
<dbReference type="SMR" id="Q7RTZ1"/>
<dbReference type="FunCoup" id="Q7RTZ1">
    <property type="interactions" value="16"/>
</dbReference>
<dbReference type="STRING" id="9606.ENSP00000484497"/>
<dbReference type="MEROPS" id="S01.320"/>
<dbReference type="GlyCosmos" id="Q7RTZ1">
    <property type="glycosylation" value="4 sites, No reported glycans"/>
</dbReference>
<dbReference type="GlyGen" id="Q7RTZ1">
    <property type="glycosylation" value="4 sites"/>
</dbReference>
<dbReference type="iPTMnet" id="Q7RTZ1"/>
<dbReference type="PhosphoSitePlus" id="Q7RTZ1"/>
<dbReference type="BioMuta" id="OVCH2"/>
<dbReference type="DMDM" id="118573095"/>
<dbReference type="MassIVE" id="Q7RTZ1"/>
<dbReference type="PaxDb" id="9606-ENSP00000484497"/>
<dbReference type="PeptideAtlas" id="Q7RTZ1"/>
<dbReference type="ProteomicsDB" id="68941"/>
<dbReference type="AGR" id="HGNC:29970"/>
<dbReference type="GeneCards" id="OVCH2"/>
<dbReference type="HGNC" id="HGNC:29970">
    <property type="gene designation" value="OVCH2"/>
</dbReference>
<dbReference type="MIM" id="618962">
    <property type="type" value="gene"/>
</dbReference>
<dbReference type="neXtProt" id="NX_Q7RTZ1"/>
<dbReference type="eggNOG" id="KOG3627">
    <property type="taxonomic scope" value="Eukaryota"/>
</dbReference>
<dbReference type="InParanoid" id="Q7RTZ1"/>
<dbReference type="OrthoDB" id="6380398at2759"/>
<dbReference type="PAN-GO" id="Q7RTZ1">
    <property type="GO annotations" value="1 GO annotation based on evolutionary models"/>
</dbReference>
<dbReference type="PhylomeDB" id="Q7RTZ1"/>
<dbReference type="PathwayCommons" id="Q7RTZ1"/>
<dbReference type="SignaLink" id="Q7RTZ1"/>
<dbReference type="ChiTaRS" id="OVCH2">
    <property type="organism name" value="human"/>
</dbReference>
<dbReference type="Pharos" id="Q7RTZ1">
    <property type="development level" value="Tdark"/>
</dbReference>
<dbReference type="PRO" id="PR:Q7RTZ1"/>
<dbReference type="Proteomes" id="UP000005640">
    <property type="component" value="Unplaced"/>
</dbReference>
<dbReference type="RNAct" id="Q7RTZ1">
    <property type="molecule type" value="protein"/>
</dbReference>
<dbReference type="GO" id="GO:0005576">
    <property type="term" value="C:extracellular region"/>
    <property type="evidence" value="ECO:0007669"/>
    <property type="project" value="UniProtKB-SubCell"/>
</dbReference>
<dbReference type="GO" id="GO:0046872">
    <property type="term" value="F:metal ion binding"/>
    <property type="evidence" value="ECO:0007669"/>
    <property type="project" value="UniProtKB-KW"/>
</dbReference>
<dbReference type="GO" id="GO:0004252">
    <property type="term" value="F:serine-type endopeptidase activity"/>
    <property type="evidence" value="ECO:0000314"/>
    <property type="project" value="UniProtKB"/>
</dbReference>
<dbReference type="GO" id="GO:0009566">
    <property type="term" value="P:fertilization"/>
    <property type="evidence" value="ECO:0000250"/>
    <property type="project" value="UniProtKB"/>
</dbReference>
<dbReference type="GO" id="GO:0006508">
    <property type="term" value="P:proteolysis"/>
    <property type="evidence" value="ECO:0007669"/>
    <property type="project" value="UniProtKB-KW"/>
</dbReference>
<dbReference type="CDD" id="cd00041">
    <property type="entry name" value="CUB"/>
    <property type="match status" value="2"/>
</dbReference>
<dbReference type="CDD" id="cd00190">
    <property type="entry name" value="Tryp_SPc"/>
    <property type="match status" value="1"/>
</dbReference>
<dbReference type="FunFam" id="2.60.120.290:FF:000013">
    <property type="entry name" value="Membrane frizzled-related protein"/>
    <property type="match status" value="1"/>
</dbReference>
<dbReference type="FunFam" id="2.40.10.10:FF:000003">
    <property type="entry name" value="Transmembrane serine protease 3"/>
    <property type="match status" value="1"/>
</dbReference>
<dbReference type="Gene3D" id="2.60.120.290">
    <property type="entry name" value="Spermadhesin, CUB domain"/>
    <property type="match status" value="2"/>
</dbReference>
<dbReference type="Gene3D" id="2.40.10.10">
    <property type="entry name" value="Trypsin-like serine proteases"/>
    <property type="match status" value="1"/>
</dbReference>
<dbReference type="InterPro" id="IPR000859">
    <property type="entry name" value="CUB_dom"/>
</dbReference>
<dbReference type="InterPro" id="IPR009003">
    <property type="entry name" value="Peptidase_S1_PA"/>
</dbReference>
<dbReference type="InterPro" id="IPR043504">
    <property type="entry name" value="Peptidase_S1_PA_chymotrypsin"/>
</dbReference>
<dbReference type="InterPro" id="IPR001314">
    <property type="entry name" value="Peptidase_S1A"/>
</dbReference>
<dbReference type="InterPro" id="IPR035914">
    <property type="entry name" value="Sperma_CUB_dom_sf"/>
</dbReference>
<dbReference type="InterPro" id="IPR001254">
    <property type="entry name" value="Trypsin_dom"/>
</dbReference>
<dbReference type="InterPro" id="IPR018114">
    <property type="entry name" value="TRYPSIN_HIS"/>
</dbReference>
<dbReference type="InterPro" id="IPR033116">
    <property type="entry name" value="TRYPSIN_SER"/>
</dbReference>
<dbReference type="PANTHER" id="PTHR24252:SF8">
    <property type="entry name" value="ACROSIN"/>
    <property type="match status" value="1"/>
</dbReference>
<dbReference type="PANTHER" id="PTHR24252">
    <property type="entry name" value="ACROSIN-RELATED"/>
    <property type="match status" value="1"/>
</dbReference>
<dbReference type="Pfam" id="PF00431">
    <property type="entry name" value="CUB"/>
    <property type="match status" value="2"/>
</dbReference>
<dbReference type="Pfam" id="PF00089">
    <property type="entry name" value="Trypsin"/>
    <property type="match status" value="1"/>
</dbReference>
<dbReference type="PRINTS" id="PR00722">
    <property type="entry name" value="CHYMOTRYPSIN"/>
</dbReference>
<dbReference type="SMART" id="SM00042">
    <property type="entry name" value="CUB"/>
    <property type="match status" value="2"/>
</dbReference>
<dbReference type="SMART" id="SM00020">
    <property type="entry name" value="Tryp_SPc"/>
    <property type="match status" value="1"/>
</dbReference>
<dbReference type="SUPFAM" id="SSF49854">
    <property type="entry name" value="Spermadhesin, CUB domain"/>
    <property type="match status" value="2"/>
</dbReference>
<dbReference type="SUPFAM" id="SSF50494">
    <property type="entry name" value="Trypsin-like serine proteases"/>
    <property type="match status" value="1"/>
</dbReference>
<dbReference type="PROSITE" id="PS01180">
    <property type="entry name" value="CUB"/>
    <property type="match status" value="2"/>
</dbReference>
<dbReference type="PROSITE" id="PS50240">
    <property type="entry name" value="TRYPSIN_DOM"/>
    <property type="match status" value="1"/>
</dbReference>
<dbReference type="PROSITE" id="PS00134">
    <property type="entry name" value="TRYPSIN_HIS"/>
    <property type="match status" value="1"/>
</dbReference>
<dbReference type="PROSITE" id="PS00135">
    <property type="entry name" value="TRYPSIN_SER"/>
    <property type="match status" value="1"/>
</dbReference>
<comment type="function">
    <text evidence="3 7">May be required for sperm ADAM3 processing and consequential sperm fertilizing ability (By similarity). In vitro, has an endopeptidase activity (PubMed:32499443).</text>
</comment>
<comment type="subcellular location">
    <subcellularLocation>
        <location evidence="2">Secreted</location>
    </subcellularLocation>
</comment>
<comment type="similarity">
    <text evidence="6">Belongs to the peptidase S1 family.</text>
</comment>
<gene>
    <name evidence="9" type="primary">OVCH2</name>
    <name type="synonym">OVTN</name>
</gene>
<protein>
    <recommendedName>
        <fullName evidence="8">Ovochymase-2</fullName>
        <ecNumber evidence="7">3.4.21.-</ecNumber>
    </recommendedName>
    <alternativeName>
        <fullName evidence="2">Oviductin</fullName>
    </alternativeName>
</protein>
<organism>
    <name type="scientific">Homo sapiens</name>
    <name type="common">Human</name>
    <dbReference type="NCBI Taxonomy" id="9606"/>
    <lineage>
        <taxon>Eukaryota</taxon>
        <taxon>Metazoa</taxon>
        <taxon>Chordata</taxon>
        <taxon>Craniata</taxon>
        <taxon>Vertebrata</taxon>
        <taxon>Euteleostomi</taxon>
        <taxon>Mammalia</taxon>
        <taxon>Eutheria</taxon>
        <taxon>Euarchontoglires</taxon>
        <taxon>Primates</taxon>
        <taxon>Haplorrhini</taxon>
        <taxon>Catarrhini</taxon>
        <taxon>Hominidae</taxon>
        <taxon>Homo</taxon>
    </lineage>
</organism>